<accession>B9IU36</accession>
<feature type="chain" id="PRO_1000198768" description="Indole-3-glycerol phosphate synthase">
    <location>
        <begin position="1"/>
        <end position="253"/>
    </location>
</feature>
<dbReference type="EC" id="4.1.1.48" evidence="1"/>
<dbReference type="EMBL" id="CP000227">
    <property type="protein sequence ID" value="ACM11732.1"/>
    <property type="molecule type" value="Genomic_DNA"/>
</dbReference>
<dbReference type="SMR" id="B9IU36"/>
<dbReference type="KEGG" id="bcq:BCQ_1302"/>
<dbReference type="HOGENOM" id="CLU_034247_2_0_9"/>
<dbReference type="UniPathway" id="UPA00035">
    <property type="reaction ID" value="UER00043"/>
</dbReference>
<dbReference type="Proteomes" id="UP000000441">
    <property type="component" value="Chromosome"/>
</dbReference>
<dbReference type="GO" id="GO:0004425">
    <property type="term" value="F:indole-3-glycerol-phosphate synthase activity"/>
    <property type="evidence" value="ECO:0007669"/>
    <property type="project" value="UniProtKB-UniRule"/>
</dbReference>
<dbReference type="GO" id="GO:0004640">
    <property type="term" value="F:phosphoribosylanthranilate isomerase activity"/>
    <property type="evidence" value="ECO:0007669"/>
    <property type="project" value="TreeGrafter"/>
</dbReference>
<dbReference type="GO" id="GO:0000162">
    <property type="term" value="P:L-tryptophan biosynthetic process"/>
    <property type="evidence" value="ECO:0007669"/>
    <property type="project" value="UniProtKB-UniRule"/>
</dbReference>
<dbReference type="CDD" id="cd00331">
    <property type="entry name" value="IGPS"/>
    <property type="match status" value="1"/>
</dbReference>
<dbReference type="FunFam" id="3.20.20.70:FF:000024">
    <property type="entry name" value="Indole-3-glycerol phosphate synthase"/>
    <property type="match status" value="1"/>
</dbReference>
<dbReference type="Gene3D" id="3.20.20.70">
    <property type="entry name" value="Aldolase class I"/>
    <property type="match status" value="1"/>
</dbReference>
<dbReference type="HAMAP" id="MF_00134_B">
    <property type="entry name" value="IGPS_B"/>
    <property type="match status" value="1"/>
</dbReference>
<dbReference type="InterPro" id="IPR013785">
    <property type="entry name" value="Aldolase_TIM"/>
</dbReference>
<dbReference type="InterPro" id="IPR045186">
    <property type="entry name" value="Indole-3-glycerol_P_synth"/>
</dbReference>
<dbReference type="InterPro" id="IPR013798">
    <property type="entry name" value="Indole-3-glycerol_P_synth_dom"/>
</dbReference>
<dbReference type="InterPro" id="IPR001468">
    <property type="entry name" value="Indole-3-GlycerolPSynthase_CS"/>
</dbReference>
<dbReference type="InterPro" id="IPR011060">
    <property type="entry name" value="RibuloseP-bd_barrel"/>
</dbReference>
<dbReference type="NCBIfam" id="NF001371">
    <property type="entry name" value="PRK00278.1-3"/>
    <property type="match status" value="1"/>
</dbReference>
<dbReference type="NCBIfam" id="NF001377">
    <property type="entry name" value="PRK00278.2-4"/>
    <property type="match status" value="1"/>
</dbReference>
<dbReference type="PANTHER" id="PTHR22854:SF2">
    <property type="entry name" value="INDOLE-3-GLYCEROL-PHOSPHATE SYNTHASE"/>
    <property type="match status" value="1"/>
</dbReference>
<dbReference type="PANTHER" id="PTHR22854">
    <property type="entry name" value="TRYPTOPHAN BIOSYNTHESIS PROTEIN"/>
    <property type="match status" value="1"/>
</dbReference>
<dbReference type="Pfam" id="PF00218">
    <property type="entry name" value="IGPS"/>
    <property type="match status" value="1"/>
</dbReference>
<dbReference type="SUPFAM" id="SSF51366">
    <property type="entry name" value="Ribulose-phoshate binding barrel"/>
    <property type="match status" value="1"/>
</dbReference>
<dbReference type="PROSITE" id="PS00614">
    <property type="entry name" value="IGPS"/>
    <property type="match status" value="1"/>
</dbReference>
<organism>
    <name type="scientific">Bacillus cereus (strain Q1)</name>
    <dbReference type="NCBI Taxonomy" id="361100"/>
    <lineage>
        <taxon>Bacteria</taxon>
        <taxon>Bacillati</taxon>
        <taxon>Bacillota</taxon>
        <taxon>Bacilli</taxon>
        <taxon>Bacillales</taxon>
        <taxon>Bacillaceae</taxon>
        <taxon>Bacillus</taxon>
        <taxon>Bacillus cereus group</taxon>
    </lineage>
</organism>
<comment type="catalytic activity">
    <reaction evidence="1">
        <text>1-(2-carboxyphenylamino)-1-deoxy-D-ribulose 5-phosphate + H(+) = (1S,2R)-1-C-(indol-3-yl)glycerol 3-phosphate + CO2 + H2O</text>
        <dbReference type="Rhea" id="RHEA:23476"/>
        <dbReference type="ChEBI" id="CHEBI:15377"/>
        <dbReference type="ChEBI" id="CHEBI:15378"/>
        <dbReference type="ChEBI" id="CHEBI:16526"/>
        <dbReference type="ChEBI" id="CHEBI:58613"/>
        <dbReference type="ChEBI" id="CHEBI:58866"/>
        <dbReference type="EC" id="4.1.1.48"/>
    </reaction>
</comment>
<comment type="pathway">
    <text evidence="1">Amino-acid biosynthesis; L-tryptophan biosynthesis; L-tryptophan from chorismate: step 4/5.</text>
</comment>
<comment type="similarity">
    <text evidence="1">Belongs to the TrpC family.</text>
</comment>
<gene>
    <name evidence="1" type="primary">trpC</name>
    <name type="ordered locus">BCQ_1302</name>
</gene>
<evidence type="ECO:0000255" key="1">
    <source>
        <dbReference type="HAMAP-Rule" id="MF_00134"/>
    </source>
</evidence>
<reference key="1">
    <citation type="journal article" date="2009" name="J. Bacteriol.">
        <title>Complete genome sequence of the extremophilic Bacillus cereus strain Q1 with industrial applications.</title>
        <authorList>
            <person name="Xiong Z."/>
            <person name="Jiang Y."/>
            <person name="Qi D."/>
            <person name="Lu H."/>
            <person name="Yang F."/>
            <person name="Yang J."/>
            <person name="Chen L."/>
            <person name="Sun L."/>
            <person name="Xu X."/>
            <person name="Xue Y."/>
            <person name="Zhu Y."/>
            <person name="Jin Q."/>
        </authorList>
    </citation>
    <scope>NUCLEOTIDE SEQUENCE [LARGE SCALE GENOMIC DNA]</scope>
    <source>
        <strain>Q1</strain>
    </source>
</reference>
<sequence length="253" mass="28446">MGTILDKIVDQKKKEVAALYETYTPVKEKRKTRSLVKALEQFTVIAEVKRASPSKGDINLHVDVRKQVKAYEECGAGAVSVLTDGQFFKGSFYDLQTAREESSIPLLCKDFIIDKIQIDRAYEAGADIILLIVAALTKEKLKELYSYVLEKGLEAIVEVHDEQELEIAIQFNPHVIGINNRNLKTFEVDLSQTEKLGKRLNEEKLLWISESGVHSKEDMIRVKRAGAKGVLVGEALMTSSSIHTFFEDCKVNI</sequence>
<keyword id="KW-0028">Amino-acid biosynthesis</keyword>
<keyword id="KW-0057">Aromatic amino acid biosynthesis</keyword>
<keyword id="KW-0210">Decarboxylase</keyword>
<keyword id="KW-0456">Lyase</keyword>
<keyword id="KW-0822">Tryptophan biosynthesis</keyword>
<name>TRPC_BACCQ</name>
<proteinExistence type="inferred from homology"/>
<protein>
    <recommendedName>
        <fullName evidence="1">Indole-3-glycerol phosphate synthase</fullName>
        <shortName evidence="1">IGPS</shortName>
        <ecNumber evidence="1">4.1.1.48</ecNumber>
    </recommendedName>
</protein>